<protein>
    <recommendedName>
        <fullName evidence="1">Adenine deaminase</fullName>
        <shortName evidence="1">Adenase</shortName>
        <shortName evidence="1">Adenine aminase</shortName>
        <ecNumber evidence="1">3.5.4.2</ecNumber>
    </recommendedName>
</protein>
<proteinExistence type="inferred from homology"/>
<reference key="1">
    <citation type="journal article" date="2005" name="Proc. Natl. Acad. Sci. U.S.A.">
        <title>The genome of Salinibacter ruber: convergence and gene exchange among hyperhalophilic bacteria and archaea.</title>
        <authorList>
            <person name="Mongodin E.F."/>
            <person name="Nelson K.E."/>
            <person name="Daugherty S."/>
            <person name="DeBoy R.T."/>
            <person name="Wister J."/>
            <person name="Khouri H."/>
            <person name="Weidman J."/>
            <person name="Walsh D.A."/>
            <person name="Papke R.T."/>
            <person name="Sanchez Perez G."/>
            <person name="Sharma A.K."/>
            <person name="Nesbo C.L."/>
            <person name="MacLeod D."/>
            <person name="Bapteste E."/>
            <person name="Doolittle W.F."/>
            <person name="Charlebois R.L."/>
            <person name="Legault B."/>
            <person name="Rodriguez-Valera F."/>
        </authorList>
    </citation>
    <scope>NUCLEOTIDE SEQUENCE [LARGE SCALE GENOMIC DNA]</scope>
    <source>
        <strain>DSM 13855 / CECT 5946 / M31</strain>
    </source>
</reference>
<feature type="chain" id="PRO_0000292399" description="Adenine deaminase">
    <location>
        <begin position="1"/>
        <end position="545"/>
    </location>
</feature>
<name>ADEC_SALRD</name>
<keyword id="KW-0378">Hydrolase</keyword>
<keyword id="KW-0464">Manganese</keyword>
<keyword id="KW-1185">Reference proteome</keyword>
<dbReference type="EC" id="3.5.4.2" evidence="1"/>
<dbReference type="EMBL" id="CP000159">
    <property type="protein sequence ID" value="ABC46110.1"/>
    <property type="status" value="ALT_INIT"/>
    <property type="molecule type" value="Genomic_DNA"/>
</dbReference>
<dbReference type="RefSeq" id="WP_118829317.1">
    <property type="nucleotide sequence ID" value="NC_007677.1"/>
</dbReference>
<dbReference type="RefSeq" id="YP_446475.1">
    <property type="nucleotide sequence ID" value="NC_007677.1"/>
</dbReference>
<dbReference type="SMR" id="Q2S006"/>
<dbReference type="STRING" id="309807.SRU_2375"/>
<dbReference type="EnsemblBacteria" id="ABC46110">
    <property type="protein sequence ID" value="ABC46110"/>
    <property type="gene ID" value="SRU_2375"/>
</dbReference>
<dbReference type="GeneID" id="83729396"/>
<dbReference type="KEGG" id="sru:SRU_2375"/>
<dbReference type="PATRIC" id="fig|309807.25.peg.2474"/>
<dbReference type="eggNOG" id="COG1001">
    <property type="taxonomic scope" value="Bacteria"/>
</dbReference>
<dbReference type="HOGENOM" id="CLU_027935_0_0_10"/>
<dbReference type="OrthoDB" id="9775607at2"/>
<dbReference type="Proteomes" id="UP000008674">
    <property type="component" value="Chromosome"/>
</dbReference>
<dbReference type="GO" id="GO:0000034">
    <property type="term" value="F:adenine deaminase activity"/>
    <property type="evidence" value="ECO:0007669"/>
    <property type="project" value="UniProtKB-UniRule"/>
</dbReference>
<dbReference type="GO" id="GO:0006146">
    <property type="term" value="P:adenine catabolic process"/>
    <property type="evidence" value="ECO:0007669"/>
    <property type="project" value="InterPro"/>
</dbReference>
<dbReference type="CDD" id="cd01295">
    <property type="entry name" value="AdeC"/>
    <property type="match status" value="1"/>
</dbReference>
<dbReference type="Gene3D" id="3.20.20.140">
    <property type="entry name" value="Metal-dependent hydrolases"/>
    <property type="match status" value="1"/>
</dbReference>
<dbReference type="HAMAP" id="MF_01518">
    <property type="entry name" value="Adenine_deamin"/>
    <property type="match status" value="1"/>
</dbReference>
<dbReference type="InterPro" id="IPR006679">
    <property type="entry name" value="Adenine_deam"/>
</dbReference>
<dbReference type="InterPro" id="IPR026912">
    <property type="entry name" value="Adenine_deam_C"/>
</dbReference>
<dbReference type="InterPro" id="IPR006680">
    <property type="entry name" value="Amidohydro-rel"/>
</dbReference>
<dbReference type="InterPro" id="IPR011059">
    <property type="entry name" value="Metal-dep_hydrolase_composite"/>
</dbReference>
<dbReference type="InterPro" id="IPR032466">
    <property type="entry name" value="Metal_Hydrolase"/>
</dbReference>
<dbReference type="NCBIfam" id="TIGR01178">
    <property type="entry name" value="ade"/>
    <property type="match status" value="1"/>
</dbReference>
<dbReference type="PANTHER" id="PTHR11113:SF2">
    <property type="entry name" value="ADENINE DEAMINASE"/>
    <property type="match status" value="1"/>
</dbReference>
<dbReference type="PANTHER" id="PTHR11113">
    <property type="entry name" value="N-ACETYLGLUCOSAMINE-6-PHOSPHATE DEACETYLASE"/>
    <property type="match status" value="1"/>
</dbReference>
<dbReference type="Pfam" id="PF13382">
    <property type="entry name" value="Adenine_deam_C"/>
    <property type="match status" value="1"/>
</dbReference>
<dbReference type="Pfam" id="PF01979">
    <property type="entry name" value="Amidohydro_1"/>
    <property type="match status" value="1"/>
</dbReference>
<dbReference type="SUPFAM" id="SSF51338">
    <property type="entry name" value="Composite domain of metallo-dependent hydrolases"/>
    <property type="match status" value="2"/>
</dbReference>
<dbReference type="SUPFAM" id="SSF51556">
    <property type="entry name" value="Metallo-dependent hydrolases"/>
    <property type="match status" value="1"/>
</dbReference>
<evidence type="ECO:0000255" key="1">
    <source>
        <dbReference type="HAMAP-Rule" id="MF_01518"/>
    </source>
</evidence>
<evidence type="ECO:0000305" key="2"/>
<organism>
    <name type="scientific">Salinibacter ruber (strain DSM 13855 / M31)</name>
    <dbReference type="NCBI Taxonomy" id="309807"/>
    <lineage>
        <taxon>Bacteria</taxon>
        <taxon>Pseudomonadati</taxon>
        <taxon>Rhodothermota</taxon>
        <taxon>Rhodothermia</taxon>
        <taxon>Rhodothermales</taxon>
        <taxon>Salinibacteraceae</taxon>
        <taxon>Salinibacter</taxon>
    </lineage>
</organism>
<comment type="catalytic activity">
    <reaction evidence="1">
        <text>adenine + H2O + H(+) = hypoxanthine + NH4(+)</text>
        <dbReference type="Rhea" id="RHEA:23688"/>
        <dbReference type="ChEBI" id="CHEBI:15377"/>
        <dbReference type="ChEBI" id="CHEBI:15378"/>
        <dbReference type="ChEBI" id="CHEBI:16708"/>
        <dbReference type="ChEBI" id="CHEBI:17368"/>
        <dbReference type="ChEBI" id="CHEBI:28938"/>
        <dbReference type="EC" id="3.5.4.2"/>
    </reaction>
</comment>
<comment type="cofactor">
    <cofactor evidence="1">
        <name>Mn(2+)</name>
        <dbReference type="ChEBI" id="CHEBI:29035"/>
    </cofactor>
</comment>
<comment type="similarity">
    <text evidence="1">Belongs to the metallo-dependent hydrolases superfamily. Adenine deaminase family.</text>
</comment>
<comment type="sequence caution" evidence="2">
    <conflict type="erroneous initiation">
        <sequence resource="EMBL-CDS" id="ABC46110"/>
    </conflict>
</comment>
<gene>
    <name evidence="1" type="primary">ade</name>
    <name type="ordered locus">SRU_2375</name>
</gene>
<accession>Q2S006</accession>
<sequence>MPASFSIAGRLVDLHARAIRPATVHVQDGVIARIEPAETVPERHLLPGFIDAHVHVESAMLPPSEFARAAVRHGTVGTVSDPHEIANVLGVEGVEYMIADGRPVPFHFAFGAPSCVPATPFETSGAELGPDAVSALLDRDDVPYLSEMMDYPGAIDGAPNVLAKIRAAQVRDKPVDGHAPGLRGDDVAQYAAAGIETDHECVSIEEAREKLEAGMKIAIREGSAAKNFDELIPLMDEAPDRLMFCSDDRHPDALAEGHIDTLVRRALNRGYDRFDVLRAACVHPVEHYGLDVGLLREGDPADFIVVDDLDALNVQETYVEGALVAEEGETHIEHVASDVVNRFDAEPVAPADFRVPAGGDRLRVITAVDNQLGTGEEVVTTPTDDGYAVADPDRDVLKLAVVNRYTEESTPAVAFVRGFGLDGGALASSVAHDSHNVVAVGARDDALARAVNAVVRAEGGISAAAEGTQVLPLPIAGLMSDEPYDVVARRYTRLTDYVRAELGSAMDAPFMTLSFLSLLVIPQLKLSDRGLFDGAAFEFVDRFVD</sequence>